<dbReference type="EMBL" id="AB065880">
    <property type="protein sequence ID" value="BAC06098.1"/>
    <property type="molecule type" value="Genomic_DNA"/>
</dbReference>
<dbReference type="EMBL" id="AF399572">
    <property type="protein sequence ID" value="AAK95057.1"/>
    <property type="molecule type" value="Genomic_DNA"/>
</dbReference>
<dbReference type="EMBL" id="BK004521">
    <property type="protein sequence ID" value="DAA04919.1"/>
    <property type="molecule type" value="Genomic_DNA"/>
</dbReference>
<dbReference type="CCDS" id="CCDS32027.1"/>
<dbReference type="RefSeq" id="NP_001004712.1">
    <property type="nucleotide sequence ID" value="NM_001004712.2"/>
</dbReference>
<dbReference type="SMR" id="Q8NGD5"/>
<dbReference type="BioGRID" id="125790">
    <property type="interactions" value="1"/>
</dbReference>
<dbReference type="FunCoup" id="Q8NGD5">
    <property type="interactions" value="416"/>
</dbReference>
<dbReference type="STRING" id="9606.ENSP00000493106"/>
<dbReference type="GlyCosmos" id="Q8NGD5">
    <property type="glycosylation" value="1 site, No reported glycans"/>
</dbReference>
<dbReference type="GlyGen" id="Q8NGD5">
    <property type="glycosylation" value="1 site"/>
</dbReference>
<dbReference type="PhosphoSitePlus" id="Q8NGD5"/>
<dbReference type="BioMuta" id="OR4K14"/>
<dbReference type="DMDM" id="38372675"/>
<dbReference type="PaxDb" id="9606-ENSP00000305011"/>
<dbReference type="PeptideAtlas" id="Q8NGD5"/>
<dbReference type="ProteomicsDB" id="73485"/>
<dbReference type="Antibodypedia" id="57315">
    <property type="antibodies" value="130 antibodies from 19 providers"/>
</dbReference>
<dbReference type="DNASU" id="122740"/>
<dbReference type="Ensembl" id="ENST00000641793.1">
    <property type="protein sequence ID" value="ENSP00000493106.1"/>
    <property type="gene ID" value="ENSG00000169484.4"/>
</dbReference>
<dbReference type="Ensembl" id="ENST00000708837.1">
    <property type="protein sequence ID" value="ENSP00000517368.1"/>
    <property type="gene ID" value="ENSG00000291805.1"/>
</dbReference>
<dbReference type="GeneID" id="122740"/>
<dbReference type="KEGG" id="hsa:122740"/>
<dbReference type="MANE-Select" id="ENST00000641793.1">
    <property type="protein sequence ID" value="ENSP00000493106.1"/>
    <property type="RefSeq nucleotide sequence ID" value="NM_001004712.2"/>
    <property type="RefSeq protein sequence ID" value="NP_001004712.1"/>
</dbReference>
<dbReference type="UCSC" id="uc010tky.3">
    <property type="organism name" value="human"/>
</dbReference>
<dbReference type="AGR" id="HGNC:15352"/>
<dbReference type="CTD" id="122740"/>
<dbReference type="GeneCards" id="OR4K14"/>
<dbReference type="HGNC" id="HGNC:15352">
    <property type="gene designation" value="OR4K14"/>
</dbReference>
<dbReference type="HPA" id="ENSG00000169484">
    <property type="expression patterns" value="Not detected"/>
</dbReference>
<dbReference type="neXtProt" id="NX_Q8NGD5"/>
<dbReference type="PharmGKB" id="PA32313"/>
<dbReference type="VEuPathDB" id="HostDB:ENSG00000169484"/>
<dbReference type="eggNOG" id="ENOG502SK03">
    <property type="taxonomic scope" value="Eukaryota"/>
</dbReference>
<dbReference type="GeneTree" id="ENSGT00940000163733"/>
<dbReference type="HOGENOM" id="CLU_012526_8_1_1"/>
<dbReference type="InParanoid" id="Q8NGD5"/>
<dbReference type="OMA" id="CLHSSPM"/>
<dbReference type="OrthoDB" id="9845816at2759"/>
<dbReference type="PAN-GO" id="Q8NGD5">
    <property type="GO annotations" value="2 GO annotations based on evolutionary models"/>
</dbReference>
<dbReference type="PhylomeDB" id="Q8NGD5"/>
<dbReference type="TreeFam" id="TF337251"/>
<dbReference type="PathwayCommons" id="Q8NGD5"/>
<dbReference type="Reactome" id="R-HSA-9752946">
    <property type="pathway name" value="Expression and translocation of olfactory receptors"/>
</dbReference>
<dbReference type="BioGRID-ORCS" id="122740">
    <property type="hits" value="3 hits in 748 CRISPR screens"/>
</dbReference>
<dbReference type="GeneWiki" id="OR4K14"/>
<dbReference type="GenomeRNAi" id="122740"/>
<dbReference type="Pharos" id="Q8NGD5">
    <property type="development level" value="Tdark"/>
</dbReference>
<dbReference type="PRO" id="PR:Q8NGD5"/>
<dbReference type="Proteomes" id="UP000005640">
    <property type="component" value="Chromosome 14"/>
</dbReference>
<dbReference type="RNAct" id="Q8NGD5">
    <property type="molecule type" value="protein"/>
</dbReference>
<dbReference type="ExpressionAtlas" id="Q8NGD5">
    <property type="expression patterns" value="baseline and differential"/>
</dbReference>
<dbReference type="GO" id="GO:0005886">
    <property type="term" value="C:plasma membrane"/>
    <property type="evidence" value="ECO:0007669"/>
    <property type="project" value="UniProtKB-SubCell"/>
</dbReference>
<dbReference type="GO" id="GO:0004930">
    <property type="term" value="F:G protein-coupled receptor activity"/>
    <property type="evidence" value="ECO:0007669"/>
    <property type="project" value="UniProtKB-KW"/>
</dbReference>
<dbReference type="GO" id="GO:0004984">
    <property type="term" value="F:olfactory receptor activity"/>
    <property type="evidence" value="ECO:0000318"/>
    <property type="project" value="GO_Central"/>
</dbReference>
<dbReference type="CDD" id="cd15226">
    <property type="entry name" value="7tmA_OR4-like"/>
    <property type="match status" value="1"/>
</dbReference>
<dbReference type="FunFam" id="1.10.1220.70:FF:000001">
    <property type="entry name" value="Olfactory receptor"/>
    <property type="match status" value="1"/>
</dbReference>
<dbReference type="FunFam" id="1.20.1070.10:FF:000012">
    <property type="entry name" value="Olfactory receptor"/>
    <property type="match status" value="1"/>
</dbReference>
<dbReference type="Gene3D" id="1.20.1070.10">
    <property type="entry name" value="Rhodopsin 7-helix transmembrane proteins"/>
    <property type="match status" value="1"/>
</dbReference>
<dbReference type="InterPro" id="IPR000276">
    <property type="entry name" value="GPCR_Rhodpsn"/>
</dbReference>
<dbReference type="InterPro" id="IPR017452">
    <property type="entry name" value="GPCR_Rhodpsn_7TM"/>
</dbReference>
<dbReference type="InterPro" id="IPR000725">
    <property type="entry name" value="Olfact_rcpt"/>
</dbReference>
<dbReference type="InterPro" id="IPR050427">
    <property type="entry name" value="Olfactory_Receptors"/>
</dbReference>
<dbReference type="PANTHER" id="PTHR48002">
    <property type="entry name" value="OLFACTORY RECEPTOR"/>
    <property type="match status" value="1"/>
</dbReference>
<dbReference type="Pfam" id="PF13853">
    <property type="entry name" value="7tm_4"/>
    <property type="match status" value="1"/>
</dbReference>
<dbReference type="PRINTS" id="PR00237">
    <property type="entry name" value="GPCRRHODOPSN"/>
</dbReference>
<dbReference type="PRINTS" id="PR00245">
    <property type="entry name" value="OLFACTORYR"/>
</dbReference>
<dbReference type="SUPFAM" id="SSF81321">
    <property type="entry name" value="Family A G protein-coupled receptor-like"/>
    <property type="match status" value="1"/>
</dbReference>
<dbReference type="PROSITE" id="PS00237">
    <property type="entry name" value="G_PROTEIN_RECEP_F1_1"/>
    <property type="match status" value="1"/>
</dbReference>
<dbReference type="PROSITE" id="PS50262">
    <property type="entry name" value="G_PROTEIN_RECEP_F1_2"/>
    <property type="match status" value="1"/>
</dbReference>
<proteinExistence type="inferred from homology"/>
<feature type="chain" id="PRO_0000150557" description="Olfactory receptor 4K14">
    <location>
        <begin position="1"/>
        <end position="310"/>
    </location>
</feature>
<feature type="topological domain" description="Extracellular" evidence="1">
    <location>
        <begin position="1"/>
        <end position="25"/>
    </location>
</feature>
<feature type="transmembrane region" description="Helical; Name=1" evidence="1">
    <location>
        <begin position="26"/>
        <end position="49"/>
    </location>
</feature>
<feature type="topological domain" description="Cytoplasmic" evidence="1">
    <location>
        <begin position="50"/>
        <end position="58"/>
    </location>
</feature>
<feature type="transmembrane region" description="Helical; Name=2" evidence="1">
    <location>
        <begin position="59"/>
        <end position="80"/>
    </location>
</feature>
<feature type="topological domain" description="Extracellular" evidence="1">
    <location>
        <begin position="81"/>
        <end position="101"/>
    </location>
</feature>
<feature type="transmembrane region" description="Helical; Name=3" evidence="1">
    <location>
        <begin position="102"/>
        <end position="121"/>
    </location>
</feature>
<feature type="topological domain" description="Cytoplasmic" evidence="1">
    <location>
        <begin position="122"/>
        <end position="140"/>
    </location>
</feature>
<feature type="transmembrane region" description="Helical; Name=4" evidence="1">
    <location>
        <begin position="141"/>
        <end position="159"/>
    </location>
</feature>
<feature type="topological domain" description="Extracellular" evidence="1">
    <location>
        <begin position="160"/>
        <end position="196"/>
    </location>
</feature>
<feature type="transmembrane region" description="Helical; Name=5" evidence="1">
    <location>
        <begin position="197"/>
        <end position="220"/>
    </location>
</feature>
<feature type="topological domain" description="Cytoplasmic" evidence="1">
    <location>
        <begin position="221"/>
        <end position="236"/>
    </location>
</feature>
<feature type="transmembrane region" description="Helical; Name=6" evidence="1">
    <location>
        <begin position="237"/>
        <end position="259"/>
    </location>
</feature>
<feature type="topological domain" description="Extracellular" evidence="1">
    <location>
        <begin position="260"/>
        <end position="270"/>
    </location>
</feature>
<feature type="transmembrane region" description="Helical; Name=7" evidence="1">
    <location>
        <begin position="271"/>
        <end position="290"/>
    </location>
</feature>
<feature type="topological domain" description="Cytoplasmic" evidence="1">
    <location>
        <begin position="291"/>
        <end position="310"/>
    </location>
</feature>
<feature type="glycosylation site" description="N-linked (GlcNAc...) asparagine" evidence="1">
    <location>
        <position position="5"/>
    </location>
</feature>
<feature type="disulfide bond" evidence="2">
    <location>
        <begin position="98"/>
        <end position="190"/>
    </location>
</feature>
<feature type="sequence variant" id="VAR_053173" description="In dbSNP:rs7157076.">
    <original>M</original>
    <variation>V</variation>
    <location>
        <position position="119"/>
    </location>
</feature>
<feature type="sequence variant" id="VAR_053174" description="In dbSNP:rs17308108.">
    <original>L</original>
    <variation>R</variation>
    <location>
        <position position="145"/>
    </location>
</feature>
<keyword id="KW-1003">Cell membrane</keyword>
<keyword id="KW-1015">Disulfide bond</keyword>
<keyword id="KW-0297">G-protein coupled receptor</keyword>
<keyword id="KW-0325">Glycoprotein</keyword>
<keyword id="KW-0472">Membrane</keyword>
<keyword id="KW-0552">Olfaction</keyword>
<keyword id="KW-0675">Receptor</keyword>
<keyword id="KW-1185">Reference proteome</keyword>
<keyword id="KW-0716">Sensory transduction</keyword>
<keyword id="KW-0807">Transducer</keyword>
<keyword id="KW-0812">Transmembrane</keyword>
<keyword id="KW-1133">Transmembrane helix</keyword>
<accession>Q8NGD5</accession>
<accession>Q6IEU1</accession>
<accession>Q96R71</accession>
<gene>
    <name type="primary">OR4K14</name>
</gene>
<protein>
    <recommendedName>
        <fullName>Olfactory receptor 4K14</fullName>
    </recommendedName>
    <alternativeName>
        <fullName>Olfactory receptor OR14-22</fullName>
    </alternativeName>
</protein>
<comment type="function">
    <text evidence="3">Odorant receptor.</text>
</comment>
<comment type="subcellular location">
    <subcellularLocation>
        <location>Cell membrane</location>
        <topology>Multi-pass membrane protein</topology>
    </subcellularLocation>
</comment>
<comment type="similarity">
    <text evidence="2">Belongs to the G-protein coupled receptor 1 family.</text>
</comment>
<comment type="online information" name="Human Olfactory Receptor Data Exploratorium (HORDE)">
    <link uri="http://genome.weizmann.ac.il/horde/card/index/symbol:OR4K14"/>
</comment>
<evidence type="ECO:0000255" key="1"/>
<evidence type="ECO:0000255" key="2">
    <source>
        <dbReference type="PROSITE-ProRule" id="PRU00521"/>
    </source>
</evidence>
<evidence type="ECO:0000305" key="3"/>
<reference key="1">
    <citation type="submission" date="2001-07" db="EMBL/GenBank/DDBJ databases">
        <title>Genome-wide discovery and analysis of human seven transmembrane helix receptor genes.</title>
        <authorList>
            <person name="Suwa M."/>
            <person name="Sato T."/>
            <person name="Okouchi I."/>
            <person name="Arita M."/>
            <person name="Futami K."/>
            <person name="Matsumoto S."/>
            <person name="Tsutsumi S."/>
            <person name="Aburatani H."/>
            <person name="Asai K."/>
            <person name="Akiyama Y."/>
        </authorList>
    </citation>
    <scope>NUCLEOTIDE SEQUENCE [GENOMIC DNA]</scope>
</reference>
<reference key="2">
    <citation type="journal article" date="2002" name="Genomics">
        <title>DEFOG: a practical scheme for deciphering families of genes.</title>
        <authorList>
            <person name="Fuchs T."/>
            <person name="Malecova B."/>
            <person name="Linhart C."/>
            <person name="Sharan R."/>
            <person name="Khen M."/>
            <person name="Herwig R."/>
            <person name="Shmulevich D."/>
            <person name="Elkon R."/>
            <person name="Steinfath M."/>
            <person name="O'Brien J.K."/>
            <person name="Radelof U."/>
            <person name="Lehrach H."/>
            <person name="Lancet D."/>
            <person name="Shamir R."/>
        </authorList>
    </citation>
    <scope>NUCLEOTIDE SEQUENCE [GENOMIC DNA] OF 69-282</scope>
</reference>
<reference key="3">
    <citation type="journal article" date="2004" name="Proc. Natl. Acad. Sci. U.S.A.">
        <title>The human olfactory receptor gene family.</title>
        <authorList>
            <person name="Malnic B."/>
            <person name="Godfrey P.A."/>
            <person name="Buck L.B."/>
        </authorList>
    </citation>
    <scope>IDENTIFICATION</scope>
</reference>
<reference key="4">
    <citation type="journal article" date="2004" name="Proc. Natl. Acad. Sci. U.S.A.">
        <authorList>
            <person name="Malnic B."/>
            <person name="Godfrey P.A."/>
            <person name="Buck L.B."/>
        </authorList>
    </citation>
    <scope>ERRATUM OF PUBMED:14983052</scope>
</reference>
<name>OR4KE_HUMAN</name>
<sequence>MDPQNYSLVSEFVLHGLCTSRHLQNFFFIFFFGVYVAIMLGNLLILVTVISDPCLHSSPMYFLLGNLAFLDMWLASFATPKMIRDFLSDQKLISFGGCMAQIFFLHFTGGAEMVLLVSMAYDRYVAICKPLHYMTLMSWQTCIRLVLASWVVGFVHSISQVAFTVNLPYCGPNEVDSFFCDLPLVIKLACMDTYVLGIIMISDSGLLSLSCFLLLLISYTVILLAIRQRAAGSTSKALSTCSAHIMVVTLFFGPCIFVYVRPFSRFSVDKLLSVFYTIFTPLLNPIIYTLRNEEMKAAMKKLQNRRVTFQ</sequence>
<organism>
    <name type="scientific">Homo sapiens</name>
    <name type="common">Human</name>
    <dbReference type="NCBI Taxonomy" id="9606"/>
    <lineage>
        <taxon>Eukaryota</taxon>
        <taxon>Metazoa</taxon>
        <taxon>Chordata</taxon>
        <taxon>Craniata</taxon>
        <taxon>Vertebrata</taxon>
        <taxon>Euteleostomi</taxon>
        <taxon>Mammalia</taxon>
        <taxon>Eutheria</taxon>
        <taxon>Euarchontoglires</taxon>
        <taxon>Primates</taxon>
        <taxon>Haplorrhini</taxon>
        <taxon>Catarrhini</taxon>
        <taxon>Hominidae</taxon>
        <taxon>Homo</taxon>
    </lineage>
</organism>